<feature type="chain" id="PRO_1000098966" description="4-hydroxy-3-methylbut-2-enyl diphosphate reductase">
    <location>
        <begin position="1"/>
        <end position="315"/>
    </location>
</feature>
<feature type="active site" description="Proton donor" evidence="1">
    <location>
        <position position="126"/>
    </location>
</feature>
<feature type="binding site" evidence="1">
    <location>
        <position position="12"/>
    </location>
    <ligand>
        <name>[4Fe-4S] cluster</name>
        <dbReference type="ChEBI" id="CHEBI:49883"/>
    </ligand>
</feature>
<feature type="binding site" evidence="1">
    <location>
        <position position="41"/>
    </location>
    <ligand>
        <name>(2E)-4-hydroxy-3-methylbut-2-enyl diphosphate</name>
        <dbReference type="ChEBI" id="CHEBI:128753"/>
    </ligand>
</feature>
<feature type="binding site" evidence="1">
    <location>
        <position position="41"/>
    </location>
    <ligand>
        <name>dimethylallyl diphosphate</name>
        <dbReference type="ChEBI" id="CHEBI:57623"/>
    </ligand>
</feature>
<feature type="binding site" evidence="1">
    <location>
        <position position="41"/>
    </location>
    <ligand>
        <name>isopentenyl diphosphate</name>
        <dbReference type="ChEBI" id="CHEBI:128769"/>
    </ligand>
</feature>
<feature type="binding site" evidence="1">
    <location>
        <position position="74"/>
    </location>
    <ligand>
        <name>(2E)-4-hydroxy-3-methylbut-2-enyl diphosphate</name>
        <dbReference type="ChEBI" id="CHEBI:128753"/>
    </ligand>
</feature>
<feature type="binding site" evidence="1">
    <location>
        <position position="74"/>
    </location>
    <ligand>
        <name>dimethylallyl diphosphate</name>
        <dbReference type="ChEBI" id="CHEBI:57623"/>
    </ligand>
</feature>
<feature type="binding site" evidence="1">
    <location>
        <position position="74"/>
    </location>
    <ligand>
        <name>isopentenyl diphosphate</name>
        <dbReference type="ChEBI" id="CHEBI:128769"/>
    </ligand>
</feature>
<feature type="binding site" evidence="1">
    <location>
        <position position="96"/>
    </location>
    <ligand>
        <name>[4Fe-4S] cluster</name>
        <dbReference type="ChEBI" id="CHEBI:49883"/>
    </ligand>
</feature>
<feature type="binding site" evidence="1">
    <location>
        <position position="124"/>
    </location>
    <ligand>
        <name>(2E)-4-hydroxy-3-methylbut-2-enyl diphosphate</name>
        <dbReference type="ChEBI" id="CHEBI:128753"/>
    </ligand>
</feature>
<feature type="binding site" evidence="1">
    <location>
        <position position="124"/>
    </location>
    <ligand>
        <name>dimethylallyl diphosphate</name>
        <dbReference type="ChEBI" id="CHEBI:57623"/>
    </ligand>
</feature>
<feature type="binding site" evidence="1">
    <location>
        <position position="124"/>
    </location>
    <ligand>
        <name>isopentenyl diphosphate</name>
        <dbReference type="ChEBI" id="CHEBI:128769"/>
    </ligand>
</feature>
<feature type="binding site" evidence="1">
    <location>
        <position position="168"/>
    </location>
    <ligand>
        <name>(2E)-4-hydroxy-3-methylbut-2-enyl diphosphate</name>
        <dbReference type="ChEBI" id="CHEBI:128753"/>
    </ligand>
</feature>
<feature type="binding site" evidence="1">
    <location>
        <position position="198"/>
    </location>
    <ligand>
        <name>[4Fe-4S] cluster</name>
        <dbReference type="ChEBI" id="CHEBI:49883"/>
    </ligand>
</feature>
<feature type="binding site" evidence="1">
    <location>
        <position position="226"/>
    </location>
    <ligand>
        <name>(2E)-4-hydroxy-3-methylbut-2-enyl diphosphate</name>
        <dbReference type="ChEBI" id="CHEBI:128753"/>
    </ligand>
</feature>
<feature type="binding site" evidence="1">
    <location>
        <position position="226"/>
    </location>
    <ligand>
        <name>dimethylallyl diphosphate</name>
        <dbReference type="ChEBI" id="CHEBI:57623"/>
    </ligand>
</feature>
<feature type="binding site" evidence="1">
    <location>
        <position position="226"/>
    </location>
    <ligand>
        <name>isopentenyl diphosphate</name>
        <dbReference type="ChEBI" id="CHEBI:128769"/>
    </ligand>
</feature>
<feature type="binding site" evidence="1">
    <location>
        <position position="227"/>
    </location>
    <ligand>
        <name>(2E)-4-hydroxy-3-methylbut-2-enyl diphosphate</name>
        <dbReference type="ChEBI" id="CHEBI:128753"/>
    </ligand>
</feature>
<feature type="binding site" evidence="1">
    <location>
        <position position="227"/>
    </location>
    <ligand>
        <name>dimethylallyl diphosphate</name>
        <dbReference type="ChEBI" id="CHEBI:57623"/>
    </ligand>
</feature>
<feature type="binding site" evidence="1">
    <location>
        <position position="227"/>
    </location>
    <ligand>
        <name>isopentenyl diphosphate</name>
        <dbReference type="ChEBI" id="CHEBI:128769"/>
    </ligand>
</feature>
<feature type="binding site" evidence="1">
    <location>
        <position position="228"/>
    </location>
    <ligand>
        <name>(2E)-4-hydroxy-3-methylbut-2-enyl diphosphate</name>
        <dbReference type="ChEBI" id="CHEBI:128753"/>
    </ligand>
</feature>
<feature type="binding site" evidence="1">
    <location>
        <position position="228"/>
    </location>
    <ligand>
        <name>dimethylallyl diphosphate</name>
        <dbReference type="ChEBI" id="CHEBI:57623"/>
    </ligand>
</feature>
<feature type="binding site" evidence="1">
    <location>
        <position position="228"/>
    </location>
    <ligand>
        <name>isopentenyl diphosphate</name>
        <dbReference type="ChEBI" id="CHEBI:128769"/>
    </ligand>
</feature>
<feature type="binding site" evidence="1">
    <location>
        <position position="270"/>
    </location>
    <ligand>
        <name>(2E)-4-hydroxy-3-methylbut-2-enyl diphosphate</name>
        <dbReference type="ChEBI" id="CHEBI:128753"/>
    </ligand>
</feature>
<feature type="binding site" evidence="1">
    <location>
        <position position="270"/>
    </location>
    <ligand>
        <name>dimethylallyl diphosphate</name>
        <dbReference type="ChEBI" id="CHEBI:57623"/>
    </ligand>
</feature>
<feature type="binding site" evidence="1">
    <location>
        <position position="270"/>
    </location>
    <ligand>
        <name>isopentenyl diphosphate</name>
        <dbReference type="ChEBI" id="CHEBI:128769"/>
    </ligand>
</feature>
<accession>B1JF80</accession>
<keyword id="KW-0004">4Fe-4S</keyword>
<keyword id="KW-0408">Iron</keyword>
<keyword id="KW-0411">Iron-sulfur</keyword>
<keyword id="KW-0414">Isoprene biosynthesis</keyword>
<keyword id="KW-0479">Metal-binding</keyword>
<keyword id="KW-0560">Oxidoreductase</keyword>
<comment type="function">
    <text evidence="1">Catalyzes the conversion of 1-hydroxy-2-methyl-2-(E)-butenyl 4-diphosphate (HMBPP) into a mixture of isopentenyl diphosphate (IPP) and dimethylallyl diphosphate (DMAPP). Acts in the terminal step of the DOXP/MEP pathway for isoprenoid precursor biosynthesis.</text>
</comment>
<comment type="catalytic activity">
    <reaction evidence="1">
        <text>isopentenyl diphosphate + 2 oxidized [2Fe-2S]-[ferredoxin] + H2O = (2E)-4-hydroxy-3-methylbut-2-enyl diphosphate + 2 reduced [2Fe-2S]-[ferredoxin] + 2 H(+)</text>
        <dbReference type="Rhea" id="RHEA:24488"/>
        <dbReference type="Rhea" id="RHEA-COMP:10000"/>
        <dbReference type="Rhea" id="RHEA-COMP:10001"/>
        <dbReference type="ChEBI" id="CHEBI:15377"/>
        <dbReference type="ChEBI" id="CHEBI:15378"/>
        <dbReference type="ChEBI" id="CHEBI:33737"/>
        <dbReference type="ChEBI" id="CHEBI:33738"/>
        <dbReference type="ChEBI" id="CHEBI:128753"/>
        <dbReference type="ChEBI" id="CHEBI:128769"/>
        <dbReference type="EC" id="1.17.7.4"/>
    </reaction>
</comment>
<comment type="catalytic activity">
    <reaction evidence="1">
        <text>dimethylallyl diphosphate + 2 oxidized [2Fe-2S]-[ferredoxin] + H2O = (2E)-4-hydroxy-3-methylbut-2-enyl diphosphate + 2 reduced [2Fe-2S]-[ferredoxin] + 2 H(+)</text>
        <dbReference type="Rhea" id="RHEA:24825"/>
        <dbReference type="Rhea" id="RHEA-COMP:10000"/>
        <dbReference type="Rhea" id="RHEA-COMP:10001"/>
        <dbReference type="ChEBI" id="CHEBI:15377"/>
        <dbReference type="ChEBI" id="CHEBI:15378"/>
        <dbReference type="ChEBI" id="CHEBI:33737"/>
        <dbReference type="ChEBI" id="CHEBI:33738"/>
        <dbReference type="ChEBI" id="CHEBI:57623"/>
        <dbReference type="ChEBI" id="CHEBI:128753"/>
        <dbReference type="EC" id="1.17.7.4"/>
    </reaction>
</comment>
<comment type="cofactor">
    <cofactor evidence="1">
        <name>[4Fe-4S] cluster</name>
        <dbReference type="ChEBI" id="CHEBI:49883"/>
    </cofactor>
    <text evidence="1">Binds 1 [4Fe-4S] cluster per subunit.</text>
</comment>
<comment type="pathway">
    <text evidence="1">Isoprenoid biosynthesis; dimethylallyl diphosphate biosynthesis; dimethylallyl diphosphate from (2E)-4-hydroxy-3-methylbutenyl diphosphate: step 1/1.</text>
</comment>
<comment type="pathway">
    <text evidence="1">Isoprenoid biosynthesis; isopentenyl diphosphate biosynthesis via DXP pathway; isopentenyl diphosphate from 1-deoxy-D-xylulose 5-phosphate: step 6/6.</text>
</comment>
<comment type="similarity">
    <text evidence="1">Belongs to the IspH family.</text>
</comment>
<sequence>MQIKLANPRGFCAGVDRAIEIVNRALEVFGPPIYVRHEVVHNKFVVEDLRSRGAIFVEELDQVPDDVIVIFSAHGVSQAVRQEAAGRGLKVFDATCPLVTKVHIEVAKYSRDGRECILIGHEGHPEVEGTMGQYDASNGGAIYLVEDEEDVARLQVRDPDNLAFVTQTTLSMDDTSRVIDALRTRFPNIGGPRKDDICYATQNRQDAVKQLAGECDVVLVVGSPNSSNSNRLRELAERMGTPAYLIDGAEDMQRGWFDQAARIGITAGASAPEVLVRGVIDQLKAWGATGAEELDGRPENITFSMPKELRVRSLI</sequence>
<organism>
    <name type="scientific">Pseudomonas putida (strain W619)</name>
    <dbReference type="NCBI Taxonomy" id="390235"/>
    <lineage>
        <taxon>Bacteria</taxon>
        <taxon>Pseudomonadati</taxon>
        <taxon>Pseudomonadota</taxon>
        <taxon>Gammaproteobacteria</taxon>
        <taxon>Pseudomonadales</taxon>
        <taxon>Pseudomonadaceae</taxon>
        <taxon>Pseudomonas</taxon>
    </lineage>
</organism>
<evidence type="ECO:0000255" key="1">
    <source>
        <dbReference type="HAMAP-Rule" id="MF_00191"/>
    </source>
</evidence>
<reference key="1">
    <citation type="submission" date="2008-02" db="EMBL/GenBank/DDBJ databases">
        <title>Complete sequence of Pseudomonas putida W619.</title>
        <authorList>
            <person name="Copeland A."/>
            <person name="Lucas S."/>
            <person name="Lapidus A."/>
            <person name="Barry K."/>
            <person name="Detter J.C."/>
            <person name="Glavina del Rio T."/>
            <person name="Dalin E."/>
            <person name="Tice H."/>
            <person name="Pitluck S."/>
            <person name="Chain P."/>
            <person name="Malfatti S."/>
            <person name="Shin M."/>
            <person name="Vergez L."/>
            <person name="Schmutz J."/>
            <person name="Larimer F."/>
            <person name="Land M."/>
            <person name="Hauser L."/>
            <person name="Kyrpides N."/>
            <person name="Kim E."/>
            <person name="Taghavi S."/>
            <person name="Vangronsveld D."/>
            <person name="van der Lelie D."/>
            <person name="Richardson P."/>
        </authorList>
    </citation>
    <scope>NUCLEOTIDE SEQUENCE [LARGE SCALE GENOMIC DNA]</scope>
    <source>
        <strain>W619</strain>
    </source>
</reference>
<name>ISPH_PSEPW</name>
<dbReference type="EC" id="1.17.7.4" evidence="1"/>
<dbReference type="EMBL" id="CP000949">
    <property type="protein sequence ID" value="ACA75036.1"/>
    <property type="molecule type" value="Genomic_DNA"/>
</dbReference>
<dbReference type="SMR" id="B1JF80"/>
<dbReference type="STRING" id="390235.PputW619_4556"/>
<dbReference type="KEGG" id="ppw:PputW619_4556"/>
<dbReference type="eggNOG" id="COG0761">
    <property type="taxonomic scope" value="Bacteria"/>
</dbReference>
<dbReference type="HOGENOM" id="CLU_027486_1_1_6"/>
<dbReference type="OrthoDB" id="9804068at2"/>
<dbReference type="UniPathway" id="UPA00056">
    <property type="reaction ID" value="UER00097"/>
</dbReference>
<dbReference type="UniPathway" id="UPA00059">
    <property type="reaction ID" value="UER00105"/>
</dbReference>
<dbReference type="GO" id="GO:0051539">
    <property type="term" value="F:4 iron, 4 sulfur cluster binding"/>
    <property type="evidence" value="ECO:0007669"/>
    <property type="project" value="UniProtKB-UniRule"/>
</dbReference>
<dbReference type="GO" id="GO:0051745">
    <property type="term" value="F:4-hydroxy-3-methylbut-2-enyl diphosphate reductase activity"/>
    <property type="evidence" value="ECO:0007669"/>
    <property type="project" value="UniProtKB-UniRule"/>
</dbReference>
<dbReference type="GO" id="GO:0046872">
    <property type="term" value="F:metal ion binding"/>
    <property type="evidence" value="ECO:0007669"/>
    <property type="project" value="UniProtKB-KW"/>
</dbReference>
<dbReference type="GO" id="GO:0050992">
    <property type="term" value="P:dimethylallyl diphosphate biosynthetic process"/>
    <property type="evidence" value="ECO:0007669"/>
    <property type="project" value="UniProtKB-UniRule"/>
</dbReference>
<dbReference type="GO" id="GO:0019288">
    <property type="term" value="P:isopentenyl diphosphate biosynthetic process, methylerythritol 4-phosphate pathway"/>
    <property type="evidence" value="ECO:0007669"/>
    <property type="project" value="UniProtKB-UniRule"/>
</dbReference>
<dbReference type="GO" id="GO:0016114">
    <property type="term" value="P:terpenoid biosynthetic process"/>
    <property type="evidence" value="ECO:0007669"/>
    <property type="project" value="UniProtKB-UniRule"/>
</dbReference>
<dbReference type="CDD" id="cd13944">
    <property type="entry name" value="lytB_ispH"/>
    <property type="match status" value="1"/>
</dbReference>
<dbReference type="Gene3D" id="3.40.50.11270">
    <property type="match status" value="1"/>
</dbReference>
<dbReference type="Gene3D" id="3.40.1010.20">
    <property type="entry name" value="4-hydroxy-3-methylbut-2-enyl diphosphate reductase, catalytic domain"/>
    <property type="match status" value="2"/>
</dbReference>
<dbReference type="HAMAP" id="MF_00191">
    <property type="entry name" value="IspH"/>
    <property type="match status" value="1"/>
</dbReference>
<dbReference type="InterPro" id="IPR003451">
    <property type="entry name" value="LytB/IspH"/>
</dbReference>
<dbReference type="NCBIfam" id="TIGR00216">
    <property type="entry name" value="ispH_lytB"/>
    <property type="match status" value="1"/>
</dbReference>
<dbReference type="NCBIfam" id="NF002188">
    <property type="entry name" value="PRK01045.1-2"/>
    <property type="match status" value="1"/>
</dbReference>
<dbReference type="NCBIfam" id="NF002190">
    <property type="entry name" value="PRK01045.1-4"/>
    <property type="match status" value="1"/>
</dbReference>
<dbReference type="PANTHER" id="PTHR30426">
    <property type="entry name" value="4-HYDROXY-3-METHYLBUT-2-ENYL DIPHOSPHATE REDUCTASE"/>
    <property type="match status" value="1"/>
</dbReference>
<dbReference type="PANTHER" id="PTHR30426:SF0">
    <property type="entry name" value="4-HYDROXY-3-METHYLBUT-2-ENYL DIPHOSPHATE REDUCTASE"/>
    <property type="match status" value="1"/>
</dbReference>
<dbReference type="Pfam" id="PF02401">
    <property type="entry name" value="LYTB"/>
    <property type="match status" value="1"/>
</dbReference>
<protein>
    <recommendedName>
        <fullName evidence="1">4-hydroxy-3-methylbut-2-enyl diphosphate reductase</fullName>
        <shortName evidence="1">HMBPP reductase</shortName>
        <ecNumber evidence="1">1.17.7.4</ecNumber>
    </recommendedName>
</protein>
<gene>
    <name evidence="1" type="primary">ispH</name>
    <name type="ordered locus">PputW619_4556</name>
</gene>
<proteinExistence type="inferred from homology"/>